<evidence type="ECO:0000255" key="1">
    <source>
        <dbReference type="HAMAP-Rule" id="MF_01321"/>
    </source>
</evidence>
<accession>Q87A32</accession>
<gene>
    <name evidence="1" type="primary">rpoB</name>
    <name type="ordered locus">PD_2001</name>
</gene>
<protein>
    <recommendedName>
        <fullName evidence="1">DNA-directed RNA polymerase subunit beta</fullName>
        <shortName evidence="1">RNAP subunit beta</shortName>
        <ecNumber evidence="1">2.7.7.6</ecNumber>
    </recommendedName>
    <alternativeName>
        <fullName evidence="1">RNA polymerase subunit beta</fullName>
    </alternativeName>
    <alternativeName>
        <fullName evidence="1">Transcriptase subunit beta</fullName>
    </alternativeName>
</protein>
<keyword id="KW-0240">DNA-directed RNA polymerase</keyword>
<keyword id="KW-0548">Nucleotidyltransferase</keyword>
<keyword id="KW-1185">Reference proteome</keyword>
<keyword id="KW-0804">Transcription</keyword>
<keyword id="KW-0808">Transferase</keyword>
<comment type="function">
    <text evidence="1">DNA-dependent RNA polymerase catalyzes the transcription of DNA into RNA using the four ribonucleoside triphosphates as substrates.</text>
</comment>
<comment type="catalytic activity">
    <reaction evidence="1">
        <text>RNA(n) + a ribonucleoside 5'-triphosphate = RNA(n+1) + diphosphate</text>
        <dbReference type="Rhea" id="RHEA:21248"/>
        <dbReference type="Rhea" id="RHEA-COMP:14527"/>
        <dbReference type="Rhea" id="RHEA-COMP:17342"/>
        <dbReference type="ChEBI" id="CHEBI:33019"/>
        <dbReference type="ChEBI" id="CHEBI:61557"/>
        <dbReference type="ChEBI" id="CHEBI:140395"/>
        <dbReference type="EC" id="2.7.7.6"/>
    </reaction>
</comment>
<comment type="subunit">
    <text evidence="1">The RNAP catalytic core consists of 2 alpha, 1 beta, 1 beta' and 1 omega subunit. When a sigma factor is associated with the core the holoenzyme is formed, which can initiate transcription.</text>
</comment>
<comment type="similarity">
    <text evidence="1">Belongs to the RNA polymerase beta chain family.</text>
</comment>
<sequence length="1388" mass="154885">MKDLMTSYSFTEKKRIRKDFGKHRSILKVPFLLAIQVDSYRAFLQGDVESSQRKDIGLHGALKSVFPIVSYSGNAALEYVGYKLGEPMFDERECRQRGMSYGAPLRVTVRLVIYDRESSTKAVKYIKEQEVYLGEIPLMTENGTFIVNGTERVIVSQLHRSPGVFFDHDRGKTHSSGKLLYSARIIPCRGSWLDFEFDPKDALFTRIDRRRKLPVSILLRALGYSNEEILGEFFEINTFHINPDEGVQLELVPERLRGEILSFNLTDGGSVIVEAGKRITARHVKQLEASGISALAVPDEYLIGRILSHDVIDATTGELLASANSEVNEDRIIAFRKAGIESVGTLWVNDLDRGAYLSNTLRIDPTRTQLEAQVEIYRMMRPGEPPTKEAAQNLFHNLFFTFDRYDLSMVGRMKFNRRVGRKEVAGEPVLYDKKYFSDRNDEESRRLVSKLGETSDILDVIKGLCEIRNGRGVVDDIDHLGNRRVRSVGEMAENVFRVGLVRVERAVKERLSMAESEGLTPQELINAKPVAAAIKEFFGSSQLSQFMDQNNPLSEVTHKRRLSALGPGGLTRERAGFEVRDVHLSHYGCLCTIETPEGPNIGLINSLAVFARTNQYGFLETPYRKVVEGRVTDEVEYLSAIEENQYVIAQANTLTDDNGQLTESFVPCRFQGESLLKPPSYVHYMDVSPMQTVSVAAALVPFLEHDDANRALMGANMQRQAVPTLRAQKPLVGTGIERTVARDSGVTVNARRGGVIDQVDAGRIVVKVNESEIIGATDAGVDIYGLIKYTRSNQNTCINQRPLVNVGDIVASGDVLADGPSTDIGELALGQNMLIAFMPWNGYNFEDSILLSERVVEEDRYTTIHIEELTCIARDTKLGSEEISADIPNVSEQALNRLDESGVVYIGAEVRAGDILVGKVTPKGESQLTPEEKLLRAIFGEKASDVKDSSLRVPPGMDGTVIDVQVFTRDGIEKDKRAHQIEEYEIKRVKKDFDDQFRILEGAIYARLRSQIVGKVVNSGVDIKKGEVITDPYLDGLKKSDWFALRMKDEVAVEAIDRAQKQIQAYQKEFDQRFSDKRSKITQGDDLAPGVLKMVKVFLAVKRCIQCGDKMAGRHGNKGVISNVVPVEDMPFMEDGTPVDIVLNPLGVPSRMNIGQILEVHLGWAAKGLGHRIQRMLEANAAIADLRKFLNEIYNHDKSLVGERVDLSQFSDDELLNMAKNLTDGVPMASPVFDGASEQEIKRMLDLAELPAGGQTQLYDGHTGEPFDRKTTVGYMHYLKLNHLVDDKMHARSTGPYSLVTQQPLGGKAQFGGQRFGEMEVWALEAYGAAYTLQEMLTVKSDDVQGRNQMYKNIVDGDHQMVAGMPESFNVLVKEIRSLAINIELEDN</sequence>
<name>RPOB_XYLFT</name>
<organism>
    <name type="scientific">Xylella fastidiosa (strain Temecula1 / ATCC 700964)</name>
    <dbReference type="NCBI Taxonomy" id="183190"/>
    <lineage>
        <taxon>Bacteria</taxon>
        <taxon>Pseudomonadati</taxon>
        <taxon>Pseudomonadota</taxon>
        <taxon>Gammaproteobacteria</taxon>
        <taxon>Lysobacterales</taxon>
        <taxon>Lysobacteraceae</taxon>
        <taxon>Xylella</taxon>
    </lineage>
</organism>
<feature type="chain" id="PRO_0000048001" description="DNA-directed RNA polymerase subunit beta">
    <location>
        <begin position="1"/>
        <end position="1388"/>
    </location>
</feature>
<dbReference type="EC" id="2.7.7.6" evidence="1"/>
<dbReference type="EMBL" id="AE009442">
    <property type="protein sequence ID" value="AAO29830.1"/>
    <property type="molecule type" value="Genomic_DNA"/>
</dbReference>
<dbReference type="SMR" id="Q87A32"/>
<dbReference type="KEGG" id="xft:PD_2001"/>
<dbReference type="HOGENOM" id="CLU_000524_4_0_6"/>
<dbReference type="Proteomes" id="UP000002516">
    <property type="component" value="Chromosome"/>
</dbReference>
<dbReference type="GO" id="GO:0000428">
    <property type="term" value="C:DNA-directed RNA polymerase complex"/>
    <property type="evidence" value="ECO:0007669"/>
    <property type="project" value="UniProtKB-KW"/>
</dbReference>
<dbReference type="GO" id="GO:0003677">
    <property type="term" value="F:DNA binding"/>
    <property type="evidence" value="ECO:0007669"/>
    <property type="project" value="UniProtKB-UniRule"/>
</dbReference>
<dbReference type="GO" id="GO:0003899">
    <property type="term" value="F:DNA-directed RNA polymerase activity"/>
    <property type="evidence" value="ECO:0007669"/>
    <property type="project" value="UniProtKB-UniRule"/>
</dbReference>
<dbReference type="GO" id="GO:0032549">
    <property type="term" value="F:ribonucleoside binding"/>
    <property type="evidence" value="ECO:0007669"/>
    <property type="project" value="InterPro"/>
</dbReference>
<dbReference type="GO" id="GO:0006351">
    <property type="term" value="P:DNA-templated transcription"/>
    <property type="evidence" value="ECO:0007669"/>
    <property type="project" value="UniProtKB-UniRule"/>
</dbReference>
<dbReference type="CDD" id="cd00653">
    <property type="entry name" value="RNA_pol_B_RPB2"/>
    <property type="match status" value="1"/>
</dbReference>
<dbReference type="FunFam" id="2.40.50.100:FF:000006">
    <property type="entry name" value="DNA-directed RNA polymerase subunit beta"/>
    <property type="match status" value="1"/>
</dbReference>
<dbReference type="FunFam" id="2.40.50.150:FF:000001">
    <property type="entry name" value="DNA-directed RNA polymerase subunit beta"/>
    <property type="match status" value="1"/>
</dbReference>
<dbReference type="FunFam" id="3.90.1800.10:FF:000001">
    <property type="entry name" value="DNA-directed RNA polymerase subunit beta"/>
    <property type="match status" value="1"/>
</dbReference>
<dbReference type="Gene3D" id="2.40.50.100">
    <property type="match status" value="1"/>
</dbReference>
<dbReference type="Gene3D" id="2.40.50.150">
    <property type="match status" value="1"/>
</dbReference>
<dbReference type="Gene3D" id="3.90.1100.10">
    <property type="match status" value="3"/>
</dbReference>
<dbReference type="Gene3D" id="2.40.270.10">
    <property type="entry name" value="DNA-directed RNA polymerase, subunit 2, domain 6"/>
    <property type="match status" value="1"/>
</dbReference>
<dbReference type="Gene3D" id="3.90.1800.10">
    <property type="entry name" value="RNA polymerase alpha subunit dimerisation domain"/>
    <property type="match status" value="1"/>
</dbReference>
<dbReference type="Gene3D" id="3.90.1110.10">
    <property type="entry name" value="RNA polymerase Rpb2, domain 2"/>
    <property type="match status" value="1"/>
</dbReference>
<dbReference type="HAMAP" id="MF_01321">
    <property type="entry name" value="RNApol_bact_RpoB"/>
    <property type="match status" value="1"/>
</dbReference>
<dbReference type="InterPro" id="IPR019462">
    <property type="entry name" value="DNA-dir_RNA_pol_bsu_external_1"/>
</dbReference>
<dbReference type="InterPro" id="IPR015712">
    <property type="entry name" value="DNA-dir_RNA_pol_su2"/>
</dbReference>
<dbReference type="InterPro" id="IPR007120">
    <property type="entry name" value="DNA-dir_RNAP_su2_dom"/>
</dbReference>
<dbReference type="InterPro" id="IPR037033">
    <property type="entry name" value="DNA-dir_RNAP_su2_hyb_sf"/>
</dbReference>
<dbReference type="InterPro" id="IPR010243">
    <property type="entry name" value="RNA_pol_bsu_bac"/>
</dbReference>
<dbReference type="InterPro" id="IPR007121">
    <property type="entry name" value="RNA_pol_bsu_CS"/>
</dbReference>
<dbReference type="InterPro" id="IPR007644">
    <property type="entry name" value="RNA_pol_bsu_protrusion"/>
</dbReference>
<dbReference type="InterPro" id="IPR007642">
    <property type="entry name" value="RNA_pol_Rpb2_2"/>
</dbReference>
<dbReference type="InterPro" id="IPR037034">
    <property type="entry name" value="RNA_pol_Rpb2_2_sf"/>
</dbReference>
<dbReference type="InterPro" id="IPR007645">
    <property type="entry name" value="RNA_pol_Rpb2_3"/>
</dbReference>
<dbReference type="InterPro" id="IPR007641">
    <property type="entry name" value="RNA_pol_Rpb2_7"/>
</dbReference>
<dbReference type="InterPro" id="IPR014724">
    <property type="entry name" value="RNA_pol_RPB2_OB-fold"/>
</dbReference>
<dbReference type="NCBIfam" id="NF001616">
    <property type="entry name" value="PRK00405.1"/>
    <property type="match status" value="1"/>
</dbReference>
<dbReference type="NCBIfam" id="TIGR02013">
    <property type="entry name" value="rpoB"/>
    <property type="match status" value="1"/>
</dbReference>
<dbReference type="PANTHER" id="PTHR20856">
    <property type="entry name" value="DNA-DIRECTED RNA POLYMERASE I SUBUNIT 2"/>
    <property type="match status" value="1"/>
</dbReference>
<dbReference type="Pfam" id="PF04563">
    <property type="entry name" value="RNA_pol_Rpb2_1"/>
    <property type="match status" value="1"/>
</dbReference>
<dbReference type="Pfam" id="PF04561">
    <property type="entry name" value="RNA_pol_Rpb2_2"/>
    <property type="match status" value="2"/>
</dbReference>
<dbReference type="Pfam" id="PF04565">
    <property type="entry name" value="RNA_pol_Rpb2_3"/>
    <property type="match status" value="1"/>
</dbReference>
<dbReference type="Pfam" id="PF10385">
    <property type="entry name" value="RNA_pol_Rpb2_45"/>
    <property type="match status" value="1"/>
</dbReference>
<dbReference type="Pfam" id="PF00562">
    <property type="entry name" value="RNA_pol_Rpb2_6"/>
    <property type="match status" value="1"/>
</dbReference>
<dbReference type="Pfam" id="PF04560">
    <property type="entry name" value="RNA_pol_Rpb2_7"/>
    <property type="match status" value="1"/>
</dbReference>
<dbReference type="SUPFAM" id="SSF64484">
    <property type="entry name" value="beta and beta-prime subunits of DNA dependent RNA-polymerase"/>
    <property type="match status" value="1"/>
</dbReference>
<dbReference type="PROSITE" id="PS01166">
    <property type="entry name" value="RNA_POL_BETA"/>
    <property type="match status" value="1"/>
</dbReference>
<reference key="1">
    <citation type="journal article" date="2003" name="J. Bacteriol.">
        <title>Comparative analyses of the complete genome sequences of Pierce's disease and citrus variegated chlorosis strains of Xylella fastidiosa.</title>
        <authorList>
            <person name="Van Sluys M.A."/>
            <person name="de Oliveira M.C."/>
            <person name="Monteiro-Vitorello C.B."/>
            <person name="Miyaki C.Y."/>
            <person name="Furlan L.R."/>
            <person name="Camargo L.E.A."/>
            <person name="da Silva A.C.R."/>
            <person name="Moon D.H."/>
            <person name="Takita M.A."/>
            <person name="Lemos E.G.M."/>
            <person name="Machado M.A."/>
            <person name="Ferro M.I.T."/>
            <person name="da Silva F.R."/>
            <person name="Goldman M.H.S."/>
            <person name="Goldman G.H."/>
            <person name="Lemos M.V.F."/>
            <person name="El-Dorry H."/>
            <person name="Tsai S.M."/>
            <person name="Carrer H."/>
            <person name="Carraro D.M."/>
            <person name="de Oliveira R.C."/>
            <person name="Nunes L.R."/>
            <person name="Siqueira W.J."/>
            <person name="Coutinho L.L."/>
            <person name="Kimura E.T."/>
            <person name="Ferro E.S."/>
            <person name="Harakava R."/>
            <person name="Kuramae E.E."/>
            <person name="Marino C.L."/>
            <person name="Giglioti E."/>
            <person name="Abreu I.L."/>
            <person name="Alves L.M.C."/>
            <person name="do Amaral A.M."/>
            <person name="Baia G.S."/>
            <person name="Blanco S.R."/>
            <person name="Brito M.S."/>
            <person name="Cannavan F.S."/>
            <person name="Celestino A.V."/>
            <person name="da Cunha A.F."/>
            <person name="Fenille R.C."/>
            <person name="Ferro J.A."/>
            <person name="Formighieri E.F."/>
            <person name="Kishi L.T."/>
            <person name="Leoni S.G."/>
            <person name="Oliveira A.R."/>
            <person name="Rosa V.E. Jr."/>
            <person name="Sassaki F.T."/>
            <person name="Sena J.A.D."/>
            <person name="de Souza A.A."/>
            <person name="Truffi D."/>
            <person name="Tsukumo F."/>
            <person name="Yanai G.M."/>
            <person name="Zaros L.G."/>
            <person name="Civerolo E.L."/>
            <person name="Simpson A.J.G."/>
            <person name="Almeida N.F. Jr."/>
            <person name="Setubal J.C."/>
            <person name="Kitajima J.P."/>
        </authorList>
    </citation>
    <scope>NUCLEOTIDE SEQUENCE [LARGE SCALE GENOMIC DNA]</scope>
    <source>
        <strain>Temecula1 / ATCC 700964</strain>
    </source>
</reference>
<proteinExistence type="inferred from homology"/>